<comment type="function">
    <text evidence="1">Catalyzes the reduction of the glycolytic intermediate dihydroxyacetone phosphate (DHAP) to sn-glycerol 3-phosphate (G3P), the key precursor for phospholipid synthesis.</text>
</comment>
<comment type="catalytic activity">
    <reaction evidence="1">
        <text>sn-glycerol 3-phosphate + NAD(+) = dihydroxyacetone phosphate + NADH + H(+)</text>
        <dbReference type="Rhea" id="RHEA:11092"/>
        <dbReference type="ChEBI" id="CHEBI:15378"/>
        <dbReference type="ChEBI" id="CHEBI:57540"/>
        <dbReference type="ChEBI" id="CHEBI:57597"/>
        <dbReference type="ChEBI" id="CHEBI:57642"/>
        <dbReference type="ChEBI" id="CHEBI:57945"/>
        <dbReference type="EC" id="1.1.1.94"/>
    </reaction>
    <physiologicalReaction direction="right-to-left" evidence="1">
        <dbReference type="Rhea" id="RHEA:11094"/>
    </physiologicalReaction>
</comment>
<comment type="catalytic activity">
    <reaction evidence="1">
        <text>sn-glycerol 3-phosphate + NADP(+) = dihydroxyacetone phosphate + NADPH + H(+)</text>
        <dbReference type="Rhea" id="RHEA:11096"/>
        <dbReference type="ChEBI" id="CHEBI:15378"/>
        <dbReference type="ChEBI" id="CHEBI:57597"/>
        <dbReference type="ChEBI" id="CHEBI:57642"/>
        <dbReference type="ChEBI" id="CHEBI:57783"/>
        <dbReference type="ChEBI" id="CHEBI:58349"/>
        <dbReference type="EC" id="1.1.1.94"/>
    </reaction>
    <physiologicalReaction direction="right-to-left" evidence="1">
        <dbReference type="Rhea" id="RHEA:11098"/>
    </physiologicalReaction>
</comment>
<comment type="pathway">
    <text evidence="1">Membrane lipid metabolism; glycerophospholipid metabolism.</text>
</comment>
<comment type="subcellular location">
    <subcellularLocation>
        <location evidence="1">Cytoplasm</location>
    </subcellularLocation>
</comment>
<comment type="similarity">
    <text evidence="1">Belongs to the NAD-dependent glycerol-3-phosphate dehydrogenase family.</text>
</comment>
<feature type="chain" id="PRO_1000205866" description="Glycerol-3-phosphate dehydrogenase [NAD(P)+]">
    <location>
        <begin position="1"/>
        <end position="325"/>
    </location>
</feature>
<feature type="active site" description="Proton acceptor" evidence="1">
    <location>
        <position position="192"/>
    </location>
</feature>
<feature type="binding site" evidence="1">
    <location>
        <position position="14"/>
    </location>
    <ligand>
        <name>NADPH</name>
        <dbReference type="ChEBI" id="CHEBI:57783"/>
    </ligand>
</feature>
<feature type="binding site" evidence="1">
    <location>
        <position position="15"/>
    </location>
    <ligand>
        <name>NADPH</name>
        <dbReference type="ChEBI" id="CHEBI:57783"/>
    </ligand>
</feature>
<feature type="binding site" evidence="1">
    <location>
        <position position="35"/>
    </location>
    <ligand>
        <name>NADPH</name>
        <dbReference type="ChEBI" id="CHEBI:57783"/>
    </ligand>
</feature>
<feature type="binding site" evidence="1">
    <location>
        <position position="109"/>
    </location>
    <ligand>
        <name>NADPH</name>
        <dbReference type="ChEBI" id="CHEBI:57783"/>
    </ligand>
</feature>
<feature type="binding site" evidence="1">
    <location>
        <position position="109"/>
    </location>
    <ligand>
        <name>sn-glycerol 3-phosphate</name>
        <dbReference type="ChEBI" id="CHEBI:57597"/>
    </ligand>
</feature>
<feature type="binding site" evidence="1">
    <location>
        <position position="137"/>
    </location>
    <ligand>
        <name>sn-glycerol 3-phosphate</name>
        <dbReference type="ChEBI" id="CHEBI:57597"/>
    </ligand>
</feature>
<feature type="binding site" evidence="1">
    <location>
        <position position="141"/>
    </location>
    <ligand>
        <name>NADPH</name>
        <dbReference type="ChEBI" id="CHEBI:57783"/>
    </ligand>
</feature>
<feature type="binding site" evidence="1">
    <location>
        <position position="192"/>
    </location>
    <ligand>
        <name>sn-glycerol 3-phosphate</name>
        <dbReference type="ChEBI" id="CHEBI:57597"/>
    </ligand>
</feature>
<feature type="binding site" evidence="1">
    <location>
        <position position="247"/>
    </location>
    <ligand>
        <name>sn-glycerol 3-phosphate</name>
        <dbReference type="ChEBI" id="CHEBI:57597"/>
    </ligand>
</feature>
<feature type="binding site" evidence="1">
    <location>
        <position position="257"/>
    </location>
    <ligand>
        <name>sn-glycerol 3-phosphate</name>
        <dbReference type="ChEBI" id="CHEBI:57597"/>
    </ligand>
</feature>
<feature type="binding site" evidence="1">
    <location>
        <position position="258"/>
    </location>
    <ligand>
        <name>NADPH</name>
        <dbReference type="ChEBI" id="CHEBI:57783"/>
    </ligand>
</feature>
<feature type="binding site" evidence="1">
    <location>
        <position position="258"/>
    </location>
    <ligand>
        <name>sn-glycerol 3-phosphate</name>
        <dbReference type="ChEBI" id="CHEBI:57597"/>
    </ligand>
</feature>
<feature type="binding site" evidence="1">
    <location>
        <position position="259"/>
    </location>
    <ligand>
        <name>sn-glycerol 3-phosphate</name>
        <dbReference type="ChEBI" id="CHEBI:57597"/>
    </ligand>
</feature>
<feature type="binding site" evidence="1">
    <location>
        <position position="282"/>
    </location>
    <ligand>
        <name>NADPH</name>
        <dbReference type="ChEBI" id="CHEBI:57783"/>
    </ligand>
</feature>
<feature type="binding site" evidence="1">
    <location>
        <position position="284"/>
    </location>
    <ligand>
        <name>NADPH</name>
        <dbReference type="ChEBI" id="CHEBI:57783"/>
    </ligand>
</feature>
<proteinExistence type="inferred from homology"/>
<name>GPDA_RICAE</name>
<evidence type="ECO:0000255" key="1">
    <source>
        <dbReference type="HAMAP-Rule" id="MF_00394"/>
    </source>
</evidence>
<dbReference type="EC" id="1.1.1.94" evidence="1"/>
<dbReference type="EMBL" id="CP001612">
    <property type="protein sequence ID" value="ACP53482.1"/>
    <property type="molecule type" value="Genomic_DNA"/>
</dbReference>
<dbReference type="RefSeq" id="WP_012719699.1">
    <property type="nucleotide sequence ID" value="NC_012633.1"/>
</dbReference>
<dbReference type="SMR" id="C3PNH2"/>
<dbReference type="KEGG" id="raf:RAF_ORF0573"/>
<dbReference type="HOGENOM" id="CLU_033449_0_2_5"/>
<dbReference type="UniPathway" id="UPA00940"/>
<dbReference type="Proteomes" id="UP000002305">
    <property type="component" value="Chromosome"/>
</dbReference>
<dbReference type="GO" id="GO:0005829">
    <property type="term" value="C:cytosol"/>
    <property type="evidence" value="ECO:0007669"/>
    <property type="project" value="TreeGrafter"/>
</dbReference>
<dbReference type="GO" id="GO:0047952">
    <property type="term" value="F:glycerol-3-phosphate dehydrogenase [NAD(P)+] activity"/>
    <property type="evidence" value="ECO:0007669"/>
    <property type="project" value="UniProtKB-UniRule"/>
</dbReference>
<dbReference type="GO" id="GO:0051287">
    <property type="term" value="F:NAD binding"/>
    <property type="evidence" value="ECO:0007669"/>
    <property type="project" value="InterPro"/>
</dbReference>
<dbReference type="GO" id="GO:0005975">
    <property type="term" value="P:carbohydrate metabolic process"/>
    <property type="evidence" value="ECO:0007669"/>
    <property type="project" value="InterPro"/>
</dbReference>
<dbReference type="GO" id="GO:0046167">
    <property type="term" value="P:glycerol-3-phosphate biosynthetic process"/>
    <property type="evidence" value="ECO:0007669"/>
    <property type="project" value="UniProtKB-UniRule"/>
</dbReference>
<dbReference type="GO" id="GO:0046168">
    <property type="term" value="P:glycerol-3-phosphate catabolic process"/>
    <property type="evidence" value="ECO:0007669"/>
    <property type="project" value="InterPro"/>
</dbReference>
<dbReference type="GO" id="GO:0006650">
    <property type="term" value="P:glycerophospholipid metabolic process"/>
    <property type="evidence" value="ECO:0007669"/>
    <property type="project" value="UniProtKB-UniRule"/>
</dbReference>
<dbReference type="GO" id="GO:0008654">
    <property type="term" value="P:phospholipid biosynthetic process"/>
    <property type="evidence" value="ECO:0007669"/>
    <property type="project" value="UniProtKB-KW"/>
</dbReference>
<dbReference type="Gene3D" id="1.10.1040.10">
    <property type="entry name" value="N-(1-d-carboxylethyl)-l-norvaline Dehydrogenase, domain 2"/>
    <property type="match status" value="1"/>
</dbReference>
<dbReference type="Gene3D" id="3.40.50.720">
    <property type="entry name" value="NAD(P)-binding Rossmann-like Domain"/>
    <property type="match status" value="1"/>
</dbReference>
<dbReference type="HAMAP" id="MF_00394">
    <property type="entry name" value="NAD_Glyc3P_dehydrog"/>
    <property type="match status" value="1"/>
</dbReference>
<dbReference type="InterPro" id="IPR008927">
    <property type="entry name" value="6-PGluconate_DH-like_C_sf"/>
</dbReference>
<dbReference type="InterPro" id="IPR013328">
    <property type="entry name" value="6PGD_dom2"/>
</dbReference>
<dbReference type="InterPro" id="IPR006168">
    <property type="entry name" value="G3P_DH_NAD-dep"/>
</dbReference>
<dbReference type="InterPro" id="IPR006109">
    <property type="entry name" value="G3P_DH_NAD-dep_C"/>
</dbReference>
<dbReference type="InterPro" id="IPR011128">
    <property type="entry name" value="G3P_DH_NAD-dep_N"/>
</dbReference>
<dbReference type="InterPro" id="IPR036291">
    <property type="entry name" value="NAD(P)-bd_dom_sf"/>
</dbReference>
<dbReference type="NCBIfam" id="NF000947">
    <property type="entry name" value="PRK00094.2-5"/>
    <property type="match status" value="1"/>
</dbReference>
<dbReference type="PANTHER" id="PTHR11728">
    <property type="entry name" value="GLYCEROL-3-PHOSPHATE DEHYDROGENASE"/>
    <property type="match status" value="1"/>
</dbReference>
<dbReference type="PANTHER" id="PTHR11728:SF1">
    <property type="entry name" value="GLYCEROL-3-PHOSPHATE DEHYDROGENASE [NAD(+)] 2, CHLOROPLASTIC"/>
    <property type="match status" value="1"/>
</dbReference>
<dbReference type="Pfam" id="PF07479">
    <property type="entry name" value="NAD_Gly3P_dh_C"/>
    <property type="match status" value="1"/>
</dbReference>
<dbReference type="Pfam" id="PF01210">
    <property type="entry name" value="NAD_Gly3P_dh_N"/>
    <property type="match status" value="1"/>
</dbReference>
<dbReference type="PIRSF" id="PIRSF000114">
    <property type="entry name" value="Glycerol-3-P_dh"/>
    <property type="match status" value="1"/>
</dbReference>
<dbReference type="PRINTS" id="PR00077">
    <property type="entry name" value="GPDHDRGNASE"/>
</dbReference>
<dbReference type="SUPFAM" id="SSF48179">
    <property type="entry name" value="6-phosphogluconate dehydrogenase C-terminal domain-like"/>
    <property type="match status" value="1"/>
</dbReference>
<dbReference type="SUPFAM" id="SSF51735">
    <property type="entry name" value="NAD(P)-binding Rossmann-fold domains"/>
    <property type="match status" value="1"/>
</dbReference>
<dbReference type="PROSITE" id="PS00957">
    <property type="entry name" value="NAD_G3PDH"/>
    <property type="match status" value="1"/>
</dbReference>
<accession>C3PNH2</accession>
<reference key="1">
    <citation type="journal article" date="2009" name="BMC Genomics">
        <title>Analysis of the Rickettsia africae genome reveals that virulence acquisition in Rickettsia species may be explained by genome reduction.</title>
        <authorList>
            <person name="Fournier P.-E."/>
            <person name="El Karkouri K."/>
            <person name="Leroy Q."/>
            <person name="Robert C."/>
            <person name="Giumelli B."/>
            <person name="Renesto P."/>
            <person name="Socolovschi C."/>
            <person name="Parola P."/>
            <person name="Audic S."/>
            <person name="Raoult D."/>
        </authorList>
    </citation>
    <scope>NUCLEOTIDE SEQUENCE [LARGE SCALE GENOMIC DNA]</scope>
    <source>
        <strain>ESF-5</strain>
    </source>
</reference>
<gene>
    <name evidence="1" type="primary">gpsA</name>
    <name type="ordered locus">RAF_ORF0573</name>
</gene>
<organism>
    <name type="scientific">Rickettsia africae (strain ESF-5)</name>
    <dbReference type="NCBI Taxonomy" id="347255"/>
    <lineage>
        <taxon>Bacteria</taxon>
        <taxon>Pseudomonadati</taxon>
        <taxon>Pseudomonadota</taxon>
        <taxon>Alphaproteobacteria</taxon>
        <taxon>Rickettsiales</taxon>
        <taxon>Rickettsiaceae</taxon>
        <taxon>Rickettsieae</taxon>
        <taxon>Rickettsia</taxon>
        <taxon>spotted fever group</taxon>
    </lineage>
</organism>
<protein>
    <recommendedName>
        <fullName evidence="1">Glycerol-3-phosphate dehydrogenase [NAD(P)+]</fullName>
        <ecNumber evidence="1">1.1.1.94</ecNumber>
    </recommendedName>
    <alternativeName>
        <fullName evidence="1">NAD(P)(+)-dependent glycerol-3-phosphate dehydrogenase</fullName>
    </alternativeName>
    <alternativeName>
        <fullName evidence="1">NAD(P)H-dependent dihydroxyacetone-phosphate reductase</fullName>
    </alternativeName>
</protein>
<sequence>MNKFKNIAVYGGGSFGTSLASLAAQNCNNVTLFLRDEAIAKEILHNKTNVKYLGDIKLPAHLQATTNLDIIKDFELIIIALPSYAFDDSIKLLKTHSISKDNTLLIATKGFARNPTALFSDRLKTLLPYNPTAFFVGPNLAKELAKNLPASASIASLDIDIANKIAYNLSSKIFTTNVSSDIVTLQVAGALKNIFAIKSGIDLARKQGENARATLIVAALKEIAILSKALGGMQKNSDILLEGVVGDLVLTCYSLGSRNTKFGYELGISSDKQKFLQEYKELVEGREALKLVLDLIKKYNLHMPIISEVASCVIPYVMPAFAGMT</sequence>
<keyword id="KW-0963">Cytoplasm</keyword>
<keyword id="KW-0444">Lipid biosynthesis</keyword>
<keyword id="KW-0443">Lipid metabolism</keyword>
<keyword id="KW-0520">NAD</keyword>
<keyword id="KW-0521">NADP</keyword>
<keyword id="KW-0547">Nucleotide-binding</keyword>
<keyword id="KW-0560">Oxidoreductase</keyword>
<keyword id="KW-0594">Phospholipid biosynthesis</keyword>
<keyword id="KW-1208">Phospholipid metabolism</keyword>